<name>095R_FRG3G</name>
<accession>Q6GZN0</accession>
<comment type="function">
    <text evidence="2">Probable endonuclease.</text>
</comment>
<comment type="cofactor">
    <cofactor evidence="1">
        <name>Mg(2+)</name>
        <dbReference type="ChEBI" id="CHEBI:18420"/>
    </cofactor>
    <text evidence="1">Binds 2 magnesium ions per subunit.</text>
</comment>
<comment type="subcellular location">
    <subcellularLocation>
        <location evidence="1">Host nucleus</location>
    </subcellularLocation>
</comment>
<comment type="similarity">
    <text evidence="2">Belongs to the XPG/RAD2 endonuclease family.</text>
</comment>
<reference key="1">
    <citation type="journal article" date="2004" name="Virology">
        <title>Comparative genomic analyses of frog virus 3, type species of the genus Ranavirus (family Iridoviridae).</title>
        <authorList>
            <person name="Tan W.G."/>
            <person name="Barkman T.J."/>
            <person name="Gregory Chinchar V."/>
            <person name="Essani K."/>
        </authorList>
    </citation>
    <scope>NUCLEOTIDE SEQUENCE [LARGE SCALE GENOMIC DNA]</scope>
</reference>
<organism>
    <name type="scientific">Frog virus 3 (isolate Goorha)</name>
    <name type="common">FV-3</name>
    <dbReference type="NCBI Taxonomy" id="654924"/>
    <lineage>
        <taxon>Viruses</taxon>
        <taxon>Varidnaviria</taxon>
        <taxon>Bamfordvirae</taxon>
        <taxon>Nucleocytoviricota</taxon>
        <taxon>Megaviricetes</taxon>
        <taxon>Pimascovirales</taxon>
        <taxon>Iridoviridae</taxon>
        <taxon>Alphairidovirinae</taxon>
        <taxon>Ranavirus</taxon>
        <taxon>Frog virus 3</taxon>
    </lineage>
</organism>
<protein>
    <recommendedName>
        <fullName>Putative RAD2-like endonuclease 095R</fullName>
        <ecNumber>3.1.-.-</ecNumber>
    </recommendedName>
</protein>
<feature type="chain" id="PRO_0000410578" description="Putative RAD2-like endonuclease 095R">
    <location>
        <begin position="1"/>
        <end position="363"/>
    </location>
</feature>
<gene>
    <name type="ORF">FV3-095R</name>
</gene>
<proteinExistence type="inferred from homology"/>
<keyword id="KW-0255">Endonuclease</keyword>
<keyword id="KW-1048">Host nucleus</keyword>
<keyword id="KW-0378">Hydrolase</keyword>
<keyword id="KW-0460">Magnesium</keyword>
<keyword id="KW-0479">Metal-binding</keyword>
<keyword id="KW-0540">Nuclease</keyword>
<keyword id="KW-1185">Reference proteome</keyword>
<dbReference type="EC" id="3.1.-.-"/>
<dbReference type="EMBL" id="AY548484">
    <property type="protein sequence ID" value="AAT09755.1"/>
    <property type="molecule type" value="Genomic_DNA"/>
</dbReference>
<dbReference type="RefSeq" id="YP_031674.1">
    <property type="nucleotide sequence ID" value="NC_005946.1"/>
</dbReference>
<dbReference type="SMR" id="Q6GZN0"/>
<dbReference type="KEGG" id="vg:2947788"/>
<dbReference type="Proteomes" id="UP000008770">
    <property type="component" value="Segment"/>
</dbReference>
<dbReference type="GO" id="GO:0042025">
    <property type="term" value="C:host cell nucleus"/>
    <property type="evidence" value="ECO:0007669"/>
    <property type="project" value="UniProtKB-SubCell"/>
</dbReference>
<dbReference type="GO" id="GO:0008409">
    <property type="term" value="F:5'-3' exonuclease activity"/>
    <property type="evidence" value="ECO:0007669"/>
    <property type="project" value="TreeGrafter"/>
</dbReference>
<dbReference type="GO" id="GO:0017108">
    <property type="term" value="F:5'-flap endonuclease activity"/>
    <property type="evidence" value="ECO:0007669"/>
    <property type="project" value="TreeGrafter"/>
</dbReference>
<dbReference type="GO" id="GO:0003677">
    <property type="term" value="F:DNA binding"/>
    <property type="evidence" value="ECO:0007669"/>
    <property type="project" value="InterPro"/>
</dbReference>
<dbReference type="GO" id="GO:0046872">
    <property type="term" value="F:metal ion binding"/>
    <property type="evidence" value="ECO:0007669"/>
    <property type="project" value="UniProtKB-KW"/>
</dbReference>
<dbReference type="CDD" id="cd09897">
    <property type="entry name" value="H3TH_FEN1-XPG-like"/>
    <property type="match status" value="1"/>
</dbReference>
<dbReference type="Gene3D" id="1.10.150.20">
    <property type="entry name" value="5' to 3' exonuclease, C-terminal subdomain"/>
    <property type="match status" value="1"/>
</dbReference>
<dbReference type="Gene3D" id="3.40.50.1010">
    <property type="entry name" value="5'-nuclease"/>
    <property type="match status" value="1"/>
</dbReference>
<dbReference type="InterPro" id="IPR036279">
    <property type="entry name" value="5-3_exonuclease_C_sf"/>
</dbReference>
<dbReference type="InterPro" id="IPR008918">
    <property type="entry name" value="HhH2"/>
</dbReference>
<dbReference type="InterPro" id="IPR029060">
    <property type="entry name" value="PIN-like_dom_sf"/>
</dbReference>
<dbReference type="InterPro" id="IPR006086">
    <property type="entry name" value="XPG-I_dom"/>
</dbReference>
<dbReference type="InterPro" id="IPR006084">
    <property type="entry name" value="XPG/Rad2"/>
</dbReference>
<dbReference type="InterPro" id="IPR006085">
    <property type="entry name" value="XPG_DNA_repair_N"/>
</dbReference>
<dbReference type="PANTHER" id="PTHR11081">
    <property type="entry name" value="FLAP ENDONUCLEASE FAMILY MEMBER"/>
    <property type="match status" value="1"/>
</dbReference>
<dbReference type="PANTHER" id="PTHR11081:SF69">
    <property type="entry name" value="XP-G FAMILY NUCLEASE"/>
    <property type="match status" value="1"/>
</dbReference>
<dbReference type="Pfam" id="PF00867">
    <property type="entry name" value="XPG_I"/>
    <property type="match status" value="1"/>
</dbReference>
<dbReference type="Pfam" id="PF00752">
    <property type="entry name" value="XPG_N"/>
    <property type="match status" value="1"/>
</dbReference>
<dbReference type="PRINTS" id="PR00853">
    <property type="entry name" value="XPGRADSUPER"/>
</dbReference>
<dbReference type="SMART" id="SM00279">
    <property type="entry name" value="HhH2"/>
    <property type="match status" value="1"/>
</dbReference>
<dbReference type="SMART" id="SM00484">
    <property type="entry name" value="XPGI"/>
    <property type="match status" value="1"/>
</dbReference>
<dbReference type="SMART" id="SM00485">
    <property type="entry name" value="XPGN"/>
    <property type="match status" value="1"/>
</dbReference>
<dbReference type="SUPFAM" id="SSF47807">
    <property type="entry name" value="5' to 3' exonuclease, C-terminal subdomain"/>
    <property type="match status" value="1"/>
</dbReference>
<dbReference type="SUPFAM" id="SSF88723">
    <property type="entry name" value="PIN domain-like"/>
    <property type="match status" value="1"/>
</dbReference>
<organismHost>
    <name type="scientific">Dryophytes versicolor</name>
    <name type="common">chameleon treefrog</name>
    <dbReference type="NCBI Taxonomy" id="30343"/>
</organismHost>
<organismHost>
    <name type="scientific">Lithobates pipiens</name>
    <name type="common">Northern leopard frog</name>
    <name type="synonym">Rana pipiens</name>
    <dbReference type="NCBI Taxonomy" id="8404"/>
</organismHost>
<organismHost>
    <name type="scientific">Lithobates sylvaticus</name>
    <name type="common">Wood frog</name>
    <name type="synonym">Rana sylvatica</name>
    <dbReference type="NCBI Taxonomy" id="45438"/>
</organismHost>
<organismHost>
    <name type="scientific">Notophthalmus viridescens</name>
    <name type="common">Eastern newt</name>
    <name type="synonym">Triturus viridescens</name>
    <dbReference type="NCBI Taxonomy" id="8316"/>
</organismHost>
<sequence>MGIKGLKPLLRSYGVHEYTVPLSQMSGKTIAVDGTFLLHKYKNCHSVPWHYLTLYTLSNLRLRNVKVLFIFDGMSPPEKSREKSNRRCRKQALMEKGTLVKAQLEVWKKDGGEQAPELAAVSERLVKTRGLDPSLTDPETVQVLTDYVDNMSRDTRVTSDDYELMRRSLDAFGFPYADAPDEAELCCVRVVQMGIADAPMTIDSDALACGALHGVDVVYTDLHGETLTAMSTSKSKEALGLNGEQFMDLCVMCGTDFNQRVHKLGPVTALKLIKAHGSIENIPSAAPSMSCLEAVRTREILSGGDMESRRKDYEAMVQKPVSAELIRSVFPPEFLDKLLHENWQLRDAMKRMAPEAFEKCKRK</sequence>
<evidence type="ECO:0000250" key="1"/>
<evidence type="ECO:0000305" key="2"/>